<sequence>MSERKALLILHGKQALNEAVRAAVENKRKQGWKLAVRLTWEAGDAQRLVEEALAAGYRQIIAGGGDGTLRDIAEALAKQPGKASLVLLPLGTANDFSRAAAISLEPAEALELLEAPAHDIDLGEVGGQIFLNMATGGFGSQVTANTSEDLKKVLGGAAYLFTGLSRFSELHAAYGELQGPDFHWRGELLALGIGNGRQAGGGHVLCPEALVDDGLLDISILPAPQELVGTLKNLLSDGFGIDNMFVRARLPWVEIKVAEGLYINLDGEPLEGESLRFAARAGALRVHLPKDSPLLSATHRISHPD</sequence>
<evidence type="ECO:0000255" key="1">
    <source>
        <dbReference type="HAMAP-Rule" id="MF_01377"/>
    </source>
</evidence>
<evidence type="ECO:0000305" key="2"/>
<organism>
    <name type="scientific">Pseudomonas fluorescens (strain Pf0-1)</name>
    <dbReference type="NCBI Taxonomy" id="205922"/>
    <lineage>
        <taxon>Bacteria</taxon>
        <taxon>Pseudomonadati</taxon>
        <taxon>Pseudomonadota</taxon>
        <taxon>Gammaproteobacteria</taxon>
        <taxon>Pseudomonadales</taxon>
        <taxon>Pseudomonadaceae</taxon>
        <taxon>Pseudomonas</taxon>
    </lineage>
</organism>
<protein>
    <recommendedName>
        <fullName evidence="1">Probable lipid kinase YegS-like</fullName>
        <ecNumber evidence="1">2.7.1.-</ecNumber>
    </recommendedName>
</protein>
<name>YEGS_PSEPF</name>
<feature type="chain" id="PRO_0000292150" description="Probable lipid kinase YegS-like">
    <location>
        <begin position="1"/>
        <end position="305"/>
    </location>
</feature>
<feature type="domain" description="DAGKc" evidence="1">
    <location>
        <begin position="1"/>
        <end position="129"/>
    </location>
</feature>
<feature type="active site" description="Proton acceptor" evidence="1">
    <location>
        <position position="268"/>
    </location>
</feature>
<feature type="binding site" evidence="1">
    <location>
        <position position="39"/>
    </location>
    <ligand>
        <name>ATP</name>
        <dbReference type="ChEBI" id="CHEBI:30616"/>
    </ligand>
</feature>
<feature type="binding site" evidence="1">
    <location>
        <begin position="65"/>
        <end position="71"/>
    </location>
    <ligand>
        <name>ATP</name>
        <dbReference type="ChEBI" id="CHEBI:30616"/>
    </ligand>
</feature>
<feature type="binding site" evidence="1">
    <location>
        <position position="92"/>
    </location>
    <ligand>
        <name>ATP</name>
        <dbReference type="ChEBI" id="CHEBI:30616"/>
    </ligand>
</feature>
<feature type="binding site" evidence="1">
    <location>
        <position position="210"/>
    </location>
    <ligand>
        <name>Mg(2+)</name>
        <dbReference type="ChEBI" id="CHEBI:18420"/>
    </ligand>
</feature>
<feature type="binding site" evidence="1">
    <location>
        <position position="213"/>
    </location>
    <ligand>
        <name>Mg(2+)</name>
        <dbReference type="ChEBI" id="CHEBI:18420"/>
    </ligand>
</feature>
<feature type="binding site" evidence="1">
    <location>
        <position position="215"/>
    </location>
    <ligand>
        <name>Mg(2+)</name>
        <dbReference type="ChEBI" id="CHEBI:18420"/>
    </ligand>
</feature>
<proteinExistence type="inferred from homology"/>
<reference key="1">
    <citation type="journal article" date="2009" name="Genome Biol.">
        <title>Genomic and genetic analyses of diversity and plant interactions of Pseudomonas fluorescens.</title>
        <authorList>
            <person name="Silby M.W."/>
            <person name="Cerdeno-Tarraga A.M."/>
            <person name="Vernikos G.S."/>
            <person name="Giddens S.R."/>
            <person name="Jackson R.W."/>
            <person name="Preston G.M."/>
            <person name="Zhang X.-X."/>
            <person name="Moon C.D."/>
            <person name="Gehrig S.M."/>
            <person name="Godfrey S.A.C."/>
            <person name="Knight C.G."/>
            <person name="Malone J.G."/>
            <person name="Robinson Z."/>
            <person name="Spiers A.J."/>
            <person name="Harris S."/>
            <person name="Challis G.L."/>
            <person name="Yaxley A.M."/>
            <person name="Harris D."/>
            <person name="Seeger K."/>
            <person name="Murphy L."/>
            <person name="Rutter S."/>
            <person name="Squares R."/>
            <person name="Quail M.A."/>
            <person name="Saunders E."/>
            <person name="Mavromatis K."/>
            <person name="Brettin T.S."/>
            <person name="Bentley S.D."/>
            <person name="Hothersall J."/>
            <person name="Stephens E."/>
            <person name="Thomas C.M."/>
            <person name="Parkhill J."/>
            <person name="Levy S.B."/>
            <person name="Rainey P.B."/>
            <person name="Thomson N.R."/>
        </authorList>
    </citation>
    <scope>NUCLEOTIDE SEQUENCE [LARGE SCALE GENOMIC DNA]</scope>
    <source>
        <strain>Pf0-1</strain>
    </source>
</reference>
<keyword id="KW-0067">ATP-binding</keyword>
<keyword id="KW-0963">Cytoplasm</keyword>
<keyword id="KW-0418">Kinase</keyword>
<keyword id="KW-0444">Lipid biosynthesis</keyword>
<keyword id="KW-0443">Lipid metabolism</keyword>
<keyword id="KW-0460">Magnesium</keyword>
<keyword id="KW-0479">Metal-binding</keyword>
<keyword id="KW-0547">Nucleotide-binding</keyword>
<keyword id="KW-0594">Phospholipid biosynthesis</keyword>
<keyword id="KW-1208">Phospholipid metabolism</keyword>
<keyword id="KW-0808">Transferase</keyword>
<dbReference type="EC" id="2.7.1.-" evidence="1"/>
<dbReference type="EMBL" id="CP000094">
    <property type="protein sequence ID" value="ABA75695.1"/>
    <property type="status" value="ALT_INIT"/>
    <property type="molecule type" value="Genomic_DNA"/>
</dbReference>
<dbReference type="SMR" id="Q3K959"/>
<dbReference type="KEGG" id="pfo:Pfl01_3958"/>
<dbReference type="eggNOG" id="COG1597">
    <property type="taxonomic scope" value="Bacteria"/>
</dbReference>
<dbReference type="HOGENOM" id="CLU_045532_1_1_6"/>
<dbReference type="Proteomes" id="UP000002704">
    <property type="component" value="Chromosome"/>
</dbReference>
<dbReference type="GO" id="GO:0005737">
    <property type="term" value="C:cytoplasm"/>
    <property type="evidence" value="ECO:0007669"/>
    <property type="project" value="UniProtKB-SubCell"/>
</dbReference>
<dbReference type="GO" id="GO:0005886">
    <property type="term" value="C:plasma membrane"/>
    <property type="evidence" value="ECO:0007669"/>
    <property type="project" value="TreeGrafter"/>
</dbReference>
<dbReference type="GO" id="GO:0005524">
    <property type="term" value="F:ATP binding"/>
    <property type="evidence" value="ECO:0007669"/>
    <property type="project" value="UniProtKB-UniRule"/>
</dbReference>
<dbReference type="GO" id="GO:0001727">
    <property type="term" value="F:lipid kinase activity"/>
    <property type="evidence" value="ECO:0007669"/>
    <property type="project" value="UniProtKB-UniRule"/>
</dbReference>
<dbReference type="GO" id="GO:0000287">
    <property type="term" value="F:magnesium ion binding"/>
    <property type="evidence" value="ECO:0007669"/>
    <property type="project" value="UniProtKB-UniRule"/>
</dbReference>
<dbReference type="GO" id="GO:0008654">
    <property type="term" value="P:phospholipid biosynthetic process"/>
    <property type="evidence" value="ECO:0007669"/>
    <property type="project" value="UniProtKB-UniRule"/>
</dbReference>
<dbReference type="Gene3D" id="2.60.200.40">
    <property type="match status" value="1"/>
</dbReference>
<dbReference type="Gene3D" id="3.40.50.10330">
    <property type="entry name" value="Probable inorganic polyphosphate/atp-NAD kinase, domain 1"/>
    <property type="match status" value="1"/>
</dbReference>
<dbReference type="HAMAP" id="MF_01377">
    <property type="entry name" value="YegS"/>
    <property type="match status" value="1"/>
</dbReference>
<dbReference type="InterPro" id="IPR017438">
    <property type="entry name" value="ATP-NAD_kinase_N"/>
</dbReference>
<dbReference type="InterPro" id="IPR005218">
    <property type="entry name" value="Diacylglycerol/lipid_kinase"/>
</dbReference>
<dbReference type="InterPro" id="IPR001206">
    <property type="entry name" value="Diacylglycerol_kinase_cat_dom"/>
</dbReference>
<dbReference type="InterPro" id="IPR022433">
    <property type="entry name" value="Lip_kinase_YegS"/>
</dbReference>
<dbReference type="InterPro" id="IPR050187">
    <property type="entry name" value="Lipid_Phosphate_FormReg"/>
</dbReference>
<dbReference type="InterPro" id="IPR016064">
    <property type="entry name" value="NAD/diacylglycerol_kinase_sf"/>
</dbReference>
<dbReference type="InterPro" id="IPR045540">
    <property type="entry name" value="YegS/DAGK_C"/>
</dbReference>
<dbReference type="NCBIfam" id="TIGR03702">
    <property type="entry name" value="lip_kinase_YegS"/>
    <property type="match status" value="1"/>
</dbReference>
<dbReference type="NCBIfam" id="NF009602">
    <property type="entry name" value="PRK13054.1"/>
    <property type="match status" value="1"/>
</dbReference>
<dbReference type="NCBIfam" id="TIGR00147">
    <property type="entry name" value="YegS/Rv2252/BmrU family lipid kinase"/>
    <property type="match status" value="1"/>
</dbReference>
<dbReference type="PANTHER" id="PTHR12358:SF106">
    <property type="entry name" value="LIPID KINASE YEGS"/>
    <property type="match status" value="1"/>
</dbReference>
<dbReference type="PANTHER" id="PTHR12358">
    <property type="entry name" value="SPHINGOSINE KINASE"/>
    <property type="match status" value="1"/>
</dbReference>
<dbReference type="Pfam" id="PF00781">
    <property type="entry name" value="DAGK_cat"/>
    <property type="match status" value="1"/>
</dbReference>
<dbReference type="Pfam" id="PF19279">
    <property type="entry name" value="YegS_C"/>
    <property type="match status" value="1"/>
</dbReference>
<dbReference type="SMART" id="SM00046">
    <property type="entry name" value="DAGKc"/>
    <property type="match status" value="1"/>
</dbReference>
<dbReference type="SUPFAM" id="SSF111331">
    <property type="entry name" value="NAD kinase/diacylglycerol kinase-like"/>
    <property type="match status" value="1"/>
</dbReference>
<dbReference type="PROSITE" id="PS50146">
    <property type="entry name" value="DAGK"/>
    <property type="match status" value="1"/>
</dbReference>
<comment type="function">
    <text evidence="1">Probably phosphorylates lipids; the in vivo substrate is unknown.</text>
</comment>
<comment type="cofactor">
    <cofactor evidence="1">
        <name>Mg(2+)</name>
        <dbReference type="ChEBI" id="CHEBI:18420"/>
    </cofactor>
    <cofactor evidence="1">
        <name>Ca(2+)</name>
        <dbReference type="ChEBI" id="CHEBI:29108"/>
    </cofactor>
    <text evidence="1">Binds 1 Mg(2+) ion per subunit. Ca(2+) may be able to substitute.</text>
</comment>
<comment type="subcellular location">
    <subcellularLocation>
        <location evidence="1">Cytoplasm</location>
    </subcellularLocation>
</comment>
<comment type="similarity">
    <text evidence="1">Belongs to the diacylglycerol/lipid kinase family. YegS lipid kinase subfamily.</text>
</comment>
<comment type="sequence caution" evidence="2">
    <conflict type="erroneous initiation">
        <sequence resource="EMBL-CDS" id="ABA75695"/>
    </conflict>
</comment>
<gene>
    <name type="ordered locus">Pfl01_3958</name>
</gene>
<accession>Q3K959</accession>